<sequence>MKKLAAVMLTSCLMVAVGASFADEMKKDDMKKDVMMKKDDMAKDEMKKDSMAKDGMKKDAMKKDAMMKKDGMTKDEMKK</sequence>
<evidence type="ECO:0000255" key="1"/>
<evidence type="ECO:0000256" key="2">
    <source>
        <dbReference type="SAM" id="MobiDB-lite"/>
    </source>
</evidence>
<evidence type="ECO:0000269" key="3">
    <source>
    </source>
</evidence>
<evidence type="ECO:0000303" key="4">
    <source>
    </source>
</evidence>
<organism>
    <name type="scientific">Azospira oryzae (strain ATCC BAA-33 / DSM 13638 / PS)</name>
    <name type="common">Dechlorosoma suillum</name>
    <dbReference type="NCBI Taxonomy" id="640081"/>
    <lineage>
        <taxon>Bacteria</taxon>
        <taxon>Pseudomonadati</taxon>
        <taxon>Pseudomonadota</taxon>
        <taxon>Betaproteobacteria</taxon>
        <taxon>Rhodocyclales</taxon>
        <taxon>Rhodocyclaceae</taxon>
        <taxon>Azospira</taxon>
    </lineage>
</organism>
<proteinExistence type="evidence at protein level"/>
<reference key="1">
    <citation type="journal article" date="2012" name="J. Bacteriol.">
        <title>Complete genome sequence of the anaerobic perchlorate-reducing bacterium Azospira suillum strain PS.</title>
        <authorList>
            <person name="Byrne-Bailey K.G."/>
            <person name="Coates J.D."/>
        </authorList>
    </citation>
    <scope>NUCLEOTIDE SEQUENCE [LARGE SCALE GENOMIC DNA]</scope>
    <source>
        <strain>ATCC BAA-33 / DSM 13638 / PS</strain>
    </source>
</reference>
<reference key="2">
    <citation type="journal article" date="2015" name="MBio">
        <title>Novel mechanism for scavenging of hypochlorite involving a periplasmic methionine-rich peptide and methionine sulfoxide reductase.</title>
        <authorList>
            <person name="Melnyk R.A."/>
            <person name="Youngblut M.D."/>
            <person name="Clark I.C."/>
            <person name="Carlson H.K."/>
            <person name="Wetmore K.M."/>
            <person name="Price M.N."/>
            <person name="Iavarone A.T."/>
            <person name="Deutschbauer A.M."/>
            <person name="Arkin A.P."/>
            <person name="Coates J.D."/>
        </authorList>
    </citation>
    <scope>FUNCTION</scope>
    <scope>SUBCELLULAR LOCATION</scope>
    <scope>INDUCTION</scope>
    <scope>OXIDATION</scope>
    <scope>DISRUPTION PHENOTYPE</scope>
    <source>
        <strain>ATCC BAA-33 / DSM 13638 / PS</strain>
    </source>
</reference>
<gene>
    <name evidence="4" type="primary">mrpX</name>
    <name type="ordered locus">Dsui_0158</name>
</gene>
<name>MRPX_AZOOP</name>
<protein>
    <recommendedName>
        <fullName evidence="4">Methionine-rich peptide X</fullName>
    </recommendedName>
</protein>
<dbReference type="EMBL" id="CP003153">
    <property type="protein sequence ID" value="AEV24580.1"/>
    <property type="molecule type" value="Genomic_DNA"/>
</dbReference>
<dbReference type="RefSeq" id="WP_014235282.1">
    <property type="nucleotide sequence ID" value="NC_016616.1"/>
</dbReference>
<dbReference type="STRING" id="640081.Dsui_0158"/>
<dbReference type="KEGG" id="dsu:Dsui_0158"/>
<dbReference type="eggNOG" id="ENOG5030IAG">
    <property type="taxonomic scope" value="Bacteria"/>
</dbReference>
<dbReference type="HOGENOM" id="CLU_148386_1_0_4"/>
<dbReference type="Proteomes" id="UP000005633">
    <property type="component" value="Chromosome"/>
</dbReference>
<dbReference type="GO" id="GO:0042597">
    <property type="term" value="C:periplasmic space"/>
    <property type="evidence" value="ECO:0007669"/>
    <property type="project" value="UniProtKB-SubCell"/>
</dbReference>
<dbReference type="InterPro" id="IPR014299">
    <property type="entry name" value="Penta_MxKDx"/>
</dbReference>
<dbReference type="NCBIfam" id="TIGR02953">
    <property type="entry name" value="penta_MxKDx"/>
    <property type="match status" value="1"/>
</dbReference>
<comment type="function">
    <text evidence="3">Serves as an oxidative stress sink, specifically for chlorite and hypochlorite.</text>
</comment>
<comment type="subcellular location">
    <subcellularLocation>
        <location evidence="3">Periplasm</location>
    </subcellularLocation>
</comment>
<comment type="induction">
    <text evidence="3">Part of the SigF regulon, induced by chlorite under positive control of SigF. Part of the probable yedZ1-yedY1-mrpX operon. Transcript levels are 20- to 60-fold increased when induced by chlorite or hypochlorite or in the absence of anti-sigma factor NrsF. Not induced by hydrogen peroxide.</text>
</comment>
<comment type="PTM">
    <text evidence="3">Protein is oxidized (possibly on Met residues) when cells are exposed to chlorite or hypochlorite; initially the protein is highly oxidized, by 50 minutes all protein is in the reduced form.</text>
</comment>
<comment type="disruption phenotype">
    <text evidence="3">Growth somewhat inhibited by chlorite.</text>
</comment>
<keyword id="KW-0558">Oxidation</keyword>
<keyword id="KW-0574">Periplasm</keyword>
<keyword id="KW-0732">Signal</keyword>
<keyword id="KW-0346">Stress response</keyword>
<feature type="signal peptide" evidence="1">
    <location>
        <begin position="1"/>
        <end position="22"/>
    </location>
</feature>
<feature type="chain" id="PRO_5003514902" description="Methionine-rich peptide X" evidence="1">
    <location>
        <begin position="23"/>
        <end position="79"/>
    </location>
</feature>
<feature type="region of interest" description="Disordered" evidence="2">
    <location>
        <begin position="37"/>
        <end position="79"/>
    </location>
</feature>
<accession>G8QM64</accession>